<gene>
    <name evidence="1" type="primary">rsmG</name>
    <name type="ordered locus">MGAS2096_Spy0295</name>
</gene>
<evidence type="ECO:0000255" key="1">
    <source>
        <dbReference type="HAMAP-Rule" id="MF_00074"/>
    </source>
</evidence>
<organism>
    <name type="scientific">Streptococcus pyogenes serotype M12 (strain MGAS2096)</name>
    <dbReference type="NCBI Taxonomy" id="370553"/>
    <lineage>
        <taxon>Bacteria</taxon>
        <taxon>Bacillati</taxon>
        <taxon>Bacillota</taxon>
        <taxon>Bacilli</taxon>
        <taxon>Lactobacillales</taxon>
        <taxon>Streptococcaceae</taxon>
        <taxon>Streptococcus</taxon>
    </lineage>
</organism>
<feature type="chain" id="PRO_1000010220" description="Ribosomal RNA small subunit methyltransferase G">
    <location>
        <begin position="1"/>
        <end position="237"/>
    </location>
</feature>
<feature type="binding site" evidence="1">
    <location>
        <position position="78"/>
    </location>
    <ligand>
        <name>S-adenosyl-L-methionine</name>
        <dbReference type="ChEBI" id="CHEBI:59789"/>
    </ligand>
</feature>
<feature type="binding site" evidence="1">
    <location>
        <position position="83"/>
    </location>
    <ligand>
        <name>S-adenosyl-L-methionine</name>
        <dbReference type="ChEBI" id="CHEBI:59789"/>
    </ligand>
</feature>
<feature type="binding site" evidence="1">
    <location>
        <begin position="129"/>
        <end position="130"/>
    </location>
    <ligand>
        <name>S-adenosyl-L-methionine</name>
        <dbReference type="ChEBI" id="CHEBI:59789"/>
    </ligand>
</feature>
<feature type="binding site" evidence="1">
    <location>
        <position position="148"/>
    </location>
    <ligand>
        <name>S-adenosyl-L-methionine</name>
        <dbReference type="ChEBI" id="CHEBI:59789"/>
    </ligand>
</feature>
<proteinExistence type="inferred from homology"/>
<keyword id="KW-0963">Cytoplasm</keyword>
<keyword id="KW-0489">Methyltransferase</keyword>
<keyword id="KW-0698">rRNA processing</keyword>
<keyword id="KW-0949">S-adenosyl-L-methionine</keyword>
<keyword id="KW-0808">Transferase</keyword>
<reference key="1">
    <citation type="journal article" date="2006" name="Proc. Natl. Acad. Sci. U.S.A.">
        <title>Molecular genetic anatomy of inter- and intraserotype variation in the human bacterial pathogen group A Streptococcus.</title>
        <authorList>
            <person name="Beres S.B."/>
            <person name="Richter E.W."/>
            <person name="Nagiec M.J."/>
            <person name="Sumby P."/>
            <person name="Porcella S.F."/>
            <person name="DeLeo F.R."/>
            <person name="Musser J.M."/>
        </authorList>
    </citation>
    <scope>NUCLEOTIDE SEQUENCE [LARGE SCALE GENOMIC DNA]</scope>
    <source>
        <strain>MGAS2096</strain>
    </source>
</reference>
<sequence>MTPQDFYRTLEEDGFSLSSKQKEQFDTYFKLLVEWNTKINLTAITEENEVYLKHFYDSIAPILQAFLANEPIKLLDIGAGAGFPSLPMKILFPNLEVTIIDSLNKRISFLTLLAQELGLENVHFFHGRAEDFGQDKAFRGQFDVVTARAVARMQVLSELTIPFLKIGGKLIALKAQAADQELEEAKNALCLLFGKVIKNHSYQLPNGDSRFITIVEKKKETPNKYPRKAGLPNKKPL</sequence>
<name>RSMG_STRPB</name>
<comment type="function">
    <text evidence="1">Specifically methylates the N7 position of a guanine in 16S rRNA.</text>
</comment>
<comment type="subcellular location">
    <subcellularLocation>
        <location evidence="1">Cytoplasm</location>
    </subcellularLocation>
</comment>
<comment type="similarity">
    <text evidence="1">Belongs to the methyltransferase superfamily. RNA methyltransferase RsmG family.</text>
</comment>
<accession>Q1JDG1</accession>
<dbReference type="EC" id="2.1.1.-" evidence="1"/>
<dbReference type="EMBL" id="CP000261">
    <property type="protein sequence ID" value="ABF35347.1"/>
    <property type="molecule type" value="Genomic_DNA"/>
</dbReference>
<dbReference type="SMR" id="Q1JDG1"/>
<dbReference type="KEGG" id="spj:MGAS2096_Spy0295"/>
<dbReference type="HOGENOM" id="CLU_065341_0_2_9"/>
<dbReference type="GO" id="GO:0005829">
    <property type="term" value="C:cytosol"/>
    <property type="evidence" value="ECO:0007669"/>
    <property type="project" value="TreeGrafter"/>
</dbReference>
<dbReference type="GO" id="GO:0070043">
    <property type="term" value="F:rRNA (guanine-N7-)-methyltransferase activity"/>
    <property type="evidence" value="ECO:0007669"/>
    <property type="project" value="UniProtKB-UniRule"/>
</dbReference>
<dbReference type="CDD" id="cd02440">
    <property type="entry name" value="AdoMet_MTases"/>
    <property type="match status" value="1"/>
</dbReference>
<dbReference type="FunFam" id="3.40.50.150:FF:000041">
    <property type="entry name" value="Ribosomal RNA small subunit methyltransferase G"/>
    <property type="match status" value="1"/>
</dbReference>
<dbReference type="Gene3D" id="3.40.50.150">
    <property type="entry name" value="Vaccinia Virus protein VP39"/>
    <property type="match status" value="1"/>
</dbReference>
<dbReference type="HAMAP" id="MF_00074">
    <property type="entry name" value="16SrRNA_methyltr_G"/>
    <property type="match status" value="1"/>
</dbReference>
<dbReference type="InterPro" id="IPR003682">
    <property type="entry name" value="rRNA_ssu_MeTfrase_G"/>
</dbReference>
<dbReference type="InterPro" id="IPR029063">
    <property type="entry name" value="SAM-dependent_MTases_sf"/>
</dbReference>
<dbReference type="NCBIfam" id="TIGR00138">
    <property type="entry name" value="rsmG_gidB"/>
    <property type="match status" value="1"/>
</dbReference>
<dbReference type="PANTHER" id="PTHR31760">
    <property type="entry name" value="S-ADENOSYL-L-METHIONINE-DEPENDENT METHYLTRANSFERASES SUPERFAMILY PROTEIN"/>
    <property type="match status" value="1"/>
</dbReference>
<dbReference type="PANTHER" id="PTHR31760:SF0">
    <property type="entry name" value="S-ADENOSYL-L-METHIONINE-DEPENDENT METHYLTRANSFERASES SUPERFAMILY PROTEIN"/>
    <property type="match status" value="1"/>
</dbReference>
<dbReference type="Pfam" id="PF02527">
    <property type="entry name" value="GidB"/>
    <property type="match status" value="1"/>
</dbReference>
<dbReference type="PIRSF" id="PIRSF003078">
    <property type="entry name" value="GidB"/>
    <property type="match status" value="1"/>
</dbReference>
<dbReference type="SUPFAM" id="SSF53335">
    <property type="entry name" value="S-adenosyl-L-methionine-dependent methyltransferases"/>
    <property type="match status" value="1"/>
</dbReference>
<protein>
    <recommendedName>
        <fullName evidence="1">Ribosomal RNA small subunit methyltransferase G</fullName>
        <ecNumber evidence="1">2.1.1.-</ecNumber>
    </recommendedName>
    <alternativeName>
        <fullName evidence="1">16S rRNA 7-methylguanosine methyltransferase</fullName>
        <shortName evidence="1">16S rRNA m7G methyltransferase</shortName>
    </alternativeName>
</protein>